<dbReference type="EC" id="1.1.1.23" evidence="1"/>
<dbReference type="EMBL" id="AE008923">
    <property type="protein sequence ID" value="AAM36691.1"/>
    <property type="molecule type" value="Genomic_DNA"/>
</dbReference>
<dbReference type="RefSeq" id="WP_005932042.1">
    <property type="nucleotide sequence ID" value="NC_003919.1"/>
</dbReference>
<dbReference type="SMR" id="Q8PLG9"/>
<dbReference type="GeneID" id="66910975"/>
<dbReference type="KEGG" id="xac:XAC1829"/>
<dbReference type="eggNOG" id="COG0141">
    <property type="taxonomic scope" value="Bacteria"/>
</dbReference>
<dbReference type="HOGENOM" id="CLU_006732_3_0_6"/>
<dbReference type="UniPathway" id="UPA00031">
    <property type="reaction ID" value="UER00014"/>
</dbReference>
<dbReference type="Proteomes" id="UP000000576">
    <property type="component" value="Chromosome"/>
</dbReference>
<dbReference type="GO" id="GO:0005829">
    <property type="term" value="C:cytosol"/>
    <property type="evidence" value="ECO:0007669"/>
    <property type="project" value="TreeGrafter"/>
</dbReference>
<dbReference type="GO" id="GO:0004399">
    <property type="term" value="F:histidinol dehydrogenase activity"/>
    <property type="evidence" value="ECO:0007669"/>
    <property type="project" value="UniProtKB-UniRule"/>
</dbReference>
<dbReference type="GO" id="GO:0051287">
    <property type="term" value="F:NAD binding"/>
    <property type="evidence" value="ECO:0007669"/>
    <property type="project" value="InterPro"/>
</dbReference>
<dbReference type="GO" id="GO:0008270">
    <property type="term" value="F:zinc ion binding"/>
    <property type="evidence" value="ECO:0007669"/>
    <property type="project" value="UniProtKB-UniRule"/>
</dbReference>
<dbReference type="GO" id="GO:0000105">
    <property type="term" value="P:L-histidine biosynthetic process"/>
    <property type="evidence" value="ECO:0007669"/>
    <property type="project" value="UniProtKB-UniRule"/>
</dbReference>
<dbReference type="CDD" id="cd06572">
    <property type="entry name" value="Histidinol_dh"/>
    <property type="match status" value="1"/>
</dbReference>
<dbReference type="FunFam" id="3.40.50.1980:FF:000001">
    <property type="entry name" value="Histidinol dehydrogenase"/>
    <property type="match status" value="1"/>
</dbReference>
<dbReference type="FunFam" id="3.40.50.1980:FF:000002">
    <property type="entry name" value="Histidinol dehydrogenase, chloroplastic"/>
    <property type="match status" value="1"/>
</dbReference>
<dbReference type="Gene3D" id="1.20.5.1300">
    <property type="match status" value="1"/>
</dbReference>
<dbReference type="Gene3D" id="3.40.50.1980">
    <property type="entry name" value="Nitrogenase molybdenum iron protein domain"/>
    <property type="match status" value="2"/>
</dbReference>
<dbReference type="HAMAP" id="MF_01024">
    <property type="entry name" value="HisD"/>
    <property type="match status" value="1"/>
</dbReference>
<dbReference type="InterPro" id="IPR016161">
    <property type="entry name" value="Ald_DH/histidinol_DH"/>
</dbReference>
<dbReference type="InterPro" id="IPR001692">
    <property type="entry name" value="Histidinol_DH_CS"/>
</dbReference>
<dbReference type="InterPro" id="IPR022695">
    <property type="entry name" value="Histidinol_DH_monofunct"/>
</dbReference>
<dbReference type="InterPro" id="IPR012131">
    <property type="entry name" value="Hstdl_DH"/>
</dbReference>
<dbReference type="NCBIfam" id="TIGR00069">
    <property type="entry name" value="hisD"/>
    <property type="match status" value="1"/>
</dbReference>
<dbReference type="PANTHER" id="PTHR21256:SF2">
    <property type="entry name" value="HISTIDINE BIOSYNTHESIS TRIFUNCTIONAL PROTEIN"/>
    <property type="match status" value="1"/>
</dbReference>
<dbReference type="PANTHER" id="PTHR21256">
    <property type="entry name" value="HISTIDINOL DEHYDROGENASE HDH"/>
    <property type="match status" value="1"/>
</dbReference>
<dbReference type="Pfam" id="PF00815">
    <property type="entry name" value="Histidinol_dh"/>
    <property type="match status" value="1"/>
</dbReference>
<dbReference type="PIRSF" id="PIRSF000099">
    <property type="entry name" value="Histidinol_dh"/>
    <property type="match status" value="1"/>
</dbReference>
<dbReference type="PRINTS" id="PR00083">
    <property type="entry name" value="HOLDHDRGNASE"/>
</dbReference>
<dbReference type="SUPFAM" id="SSF53720">
    <property type="entry name" value="ALDH-like"/>
    <property type="match status" value="1"/>
</dbReference>
<dbReference type="PROSITE" id="PS00611">
    <property type="entry name" value="HISOL_DEHYDROGENASE"/>
    <property type="match status" value="1"/>
</dbReference>
<gene>
    <name evidence="1" type="primary">hisD</name>
    <name type="ordered locus">XAC1829</name>
</gene>
<sequence length="431" mass="44439">MKILDWSQLDGAAQTDALTRPVQTVAARTRDAVAALIADVRTRGDAALREITAHFDGVSLDSFAVSEAEFAAAEAAVPPELRQAMQDAVARIDTFHRAGMSGGYAVETAPGVVCEKIVRPIGRVGLYVPAGSAPLPSTALMLGVPARLAGCREVVLCTPPRKDGSVDPAVLVAARLTGVRRVFKLGGAQAIAAMAYGTESLPSCDKLFGPGNSYVTEAKQQVAQSGAAAIDMPAGPSEVLVIADAGAQPAFVAADLLSQAEHGPDSQVLLLSDSDALIGAVRAQLEVQLAQLSRADIARQALAQSRLIKVQTLDEAFAISNRYAPEHLILALREPRGWLAQVEAAGSVFLGDYTPEALGDYCSGTNHVLPTSGAARAYSGVSVASFQNMVSVQAASKAGIDGIGACALVLARAEGLDAHANAVALRMGVAA</sequence>
<protein>
    <recommendedName>
        <fullName evidence="1">Histidinol dehydrogenase</fullName>
        <shortName evidence="1">HDH</shortName>
        <ecNumber evidence="1">1.1.1.23</ecNumber>
    </recommendedName>
</protein>
<proteinExistence type="inferred from homology"/>
<comment type="function">
    <text evidence="1">Catalyzes the sequential NAD-dependent oxidations of L-histidinol to L-histidinaldehyde and then to L-histidine.</text>
</comment>
<comment type="catalytic activity">
    <reaction evidence="1">
        <text>L-histidinol + 2 NAD(+) + H2O = L-histidine + 2 NADH + 3 H(+)</text>
        <dbReference type="Rhea" id="RHEA:20641"/>
        <dbReference type="ChEBI" id="CHEBI:15377"/>
        <dbReference type="ChEBI" id="CHEBI:15378"/>
        <dbReference type="ChEBI" id="CHEBI:57540"/>
        <dbReference type="ChEBI" id="CHEBI:57595"/>
        <dbReference type="ChEBI" id="CHEBI:57699"/>
        <dbReference type="ChEBI" id="CHEBI:57945"/>
        <dbReference type="EC" id="1.1.1.23"/>
    </reaction>
</comment>
<comment type="cofactor">
    <cofactor evidence="1">
        <name>Zn(2+)</name>
        <dbReference type="ChEBI" id="CHEBI:29105"/>
    </cofactor>
    <text evidence="1">Binds 1 zinc ion per subunit.</text>
</comment>
<comment type="pathway">
    <text evidence="1">Amino-acid biosynthesis; L-histidine biosynthesis; L-histidine from 5-phospho-alpha-D-ribose 1-diphosphate: step 9/9.</text>
</comment>
<comment type="similarity">
    <text evidence="1">Belongs to the histidinol dehydrogenase family.</text>
</comment>
<reference key="1">
    <citation type="journal article" date="2002" name="Nature">
        <title>Comparison of the genomes of two Xanthomonas pathogens with differing host specificities.</title>
        <authorList>
            <person name="da Silva A.C.R."/>
            <person name="Ferro J.A."/>
            <person name="Reinach F.C."/>
            <person name="Farah C.S."/>
            <person name="Furlan L.R."/>
            <person name="Quaggio R.B."/>
            <person name="Monteiro-Vitorello C.B."/>
            <person name="Van Sluys M.A."/>
            <person name="Almeida N.F. Jr."/>
            <person name="Alves L.M.C."/>
            <person name="do Amaral A.M."/>
            <person name="Bertolini M.C."/>
            <person name="Camargo L.E.A."/>
            <person name="Camarotte G."/>
            <person name="Cannavan F."/>
            <person name="Cardozo J."/>
            <person name="Chambergo F."/>
            <person name="Ciapina L.P."/>
            <person name="Cicarelli R.M.B."/>
            <person name="Coutinho L.L."/>
            <person name="Cursino-Santos J.R."/>
            <person name="El-Dorry H."/>
            <person name="Faria J.B."/>
            <person name="Ferreira A.J.S."/>
            <person name="Ferreira R.C.C."/>
            <person name="Ferro M.I.T."/>
            <person name="Formighieri E.F."/>
            <person name="Franco M.C."/>
            <person name="Greggio C.C."/>
            <person name="Gruber A."/>
            <person name="Katsuyama A.M."/>
            <person name="Kishi L.T."/>
            <person name="Leite R.P."/>
            <person name="Lemos E.G.M."/>
            <person name="Lemos M.V.F."/>
            <person name="Locali E.C."/>
            <person name="Machado M.A."/>
            <person name="Madeira A.M.B.N."/>
            <person name="Martinez-Rossi N.M."/>
            <person name="Martins E.C."/>
            <person name="Meidanis J."/>
            <person name="Menck C.F.M."/>
            <person name="Miyaki C.Y."/>
            <person name="Moon D.H."/>
            <person name="Moreira L.M."/>
            <person name="Novo M.T.M."/>
            <person name="Okura V.K."/>
            <person name="Oliveira M.C."/>
            <person name="Oliveira V.R."/>
            <person name="Pereira H.A."/>
            <person name="Rossi A."/>
            <person name="Sena J.A.D."/>
            <person name="Silva C."/>
            <person name="de Souza R.F."/>
            <person name="Spinola L.A.F."/>
            <person name="Takita M.A."/>
            <person name="Tamura R.E."/>
            <person name="Teixeira E.C."/>
            <person name="Tezza R.I.D."/>
            <person name="Trindade dos Santos M."/>
            <person name="Truffi D."/>
            <person name="Tsai S.M."/>
            <person name="White F.F."/>
            <person name="Setubal J.C."/>
            <person name="Kitajima J.P."/>
        </authorList>
    </citation>
    <scope>NUCLEOTIDE SEQUENCE [LARGE SCALE GENOMIC DNA]</scope>
    <source>
        <strain>306</strain>
    </source>
</reference>
<keyword id="KW-0028">Amino-acid biosynthesis</keyword>
<keyword id="KW-0368">Histidine biosynthesis</keyword>
<keyword id="KW-0479">Metal-binding</keyword>
<keyword id="KW-0520">NAD</keyword>
<keyword id="KW-0560">Oxidoreductase</keyword>
<keyword id="KW-0862">Zinc</keyword>
<organism>
    <name type="scientific">Xanthomonas axonopodis pv. citri (strain 306)</name>
    <dbReference type="NCBI Taxonomy" id="190486"/>
    <lineage>
        <taxon>Bacteria</taxon>
        <taxon>Pseudomonadati</taxon>
        <taxon>Pseudomonadota</taxon>
        <taxon>Gammaproteobacteria</taxon>
        <taxon>Lysobacterales</taxon>
        <taxon>Lysobacteraceae</taxon>
        <taxon>Xanthomonas</taxon>
    </lineage>
</organism>
<evidence type="ECO:0000255" key="1">
    <source>
        <dbReference type="HAMAP-Rule" id="MF_01024"/>
    </source>
</evidence>
<accession>Q8PLG9</accession>
<name>HISX_XANAC</name>
<feature type="chain" id="PRO_0000135880" description="Histidinol dehydrogenase">
    <location>
        <begin position="1"/>
        <end position="431"/>
    </location>
</feature>
<feature type="active site" description="Proton acceptor" evidence="1">
    <location>
        <position position="326"/>
    </location>
</feature>
<feature type="active site" description="Proton acceptor" evidence="1">
    <location>
        <position position="327"/>
    </location>
</feature>
<feature type="binding site" evidence="1">
    <location>
        <position position="127"/>
    </location>
    <ligand>
        <name>NAD(+)</name>
        <dbReference type="ChEBI" id="CHEBI:57540"/>
    </ligand>
</feature>
<feature type="binding site" evidence="1">
    <location>
        <position position="189"/>
    </location>
    <ligand>
        <name>NAD(+)</name>
        <dbReference type="ChEBI" id="CHEBI:57540"/>
    </ligand>
</feature>
<feature type="binding site" evidence="1">
    <location>
        <position position="212"/>
    </location>
    <ligand>
        <name>NAD(+)</name>
        <dbReference type="ChEBI" id="CHEBI:57540"/>
    </ligand>
</feature>
<feature type="binding site" evidence="1">
    <location>
        <position position="237"/>
    </location>
    <ligand>
        <name>substrate</name>
    </ligand>
</feature>
<feature type="binding site" evidence="1">
    <location>
        <position position="259"/>
    </location>
    <ligand>
        <name>substrate</name>
    </ligand>
</feature>
<feature type="binding site" evidence="1">
    <location>
        <position position="259"/>
    </location>
    <ligand>
        <name>Zn(2+)</name>
        <dbReference type="ChEBI" id="CHEBI:29105"/>
    </ligand>
</feature>
<feature type="binding site" evidence="1">
    <location>
        <position position="262"/>
    </location>
    <ligand>
        <name>substrate</name>
    </ligand>
</feature>
<feature type="binding site" evidence="1">
    <location>
        <position position="262"/>
    </location>
    <ligand>
        <name>Zn(2+)</name>
        <dbReference type="ChEBI" id="CHEBI:29105"/>
    </ligand>
</feature>
<feature type="binding site" evidence="1">
    <location>
        <position position="327"/>
    </location>
    <ligand>
        <name>substrate</name>
    </ligand>
</feature>
<feature type="binding site" evidence="1">
    <location>
        <position position="360"/>
    </location>
    <ligand>
        <name>substrate</name>
    </ligand>
</feature>
<feature type="binding site" evidence="1">
    <location>
        <position position="360"/>
    </location>
    <ligand>
        <name>Zn(2+)</name>
        <dbReference type="ChEBI" id="CHEBI:29105"/>
    </ligand>
</feature>
<feature type="binding site" evidence="1">
    <location>
        <position position="414"/>
    </location>
    <ligand>
        <name>substrate</name>
    </ligand>
</feature>
<feature type="binding site" evidence="1">
    <location>
        <position position="419"/>
    </location>
    <ligand>
        <name>substrate</name>
    </ligand>
</feature>
<feature type="binding site" evidence="1">
    <location>
        <position position="419"/>
    </location>
    <ligand>
        <name>Zn(2+)</name>
        <dbReference type="ChEBI" id="CHEBI:29105"/>
    </ligand>
</feature>